<comment type="function">
    <text evidence="1">Produces ATP from ADP in the presence of a proton gradient across the membrane.</text>
</comment>
<comment type="subunit">
    <text evidence="1">F-type ATPases have 2 components, CF(1) - the catalytic core - and CF(0) - the membrane proton channel. CF(1) has five subunits: alpha(3), beta(3), gamma(1), delta(1), epsilon(1). CF(0) has three main subunits: a, b and c.</text>
</comment>
<comment type="subcellular location">
    <subcellularLocation>
        <location evidence="1">Plastid</location>
        <location evidence="1">Chloroplast thylakoid membrane</location>
        <topology evidence="1">Peripheral membrane protein</topology>
    </subcellularLocation>
</comment>
<comment type="similarity">
    <text evidence="1">Belongs to the ATPase epsilon chain family.</text>
</comment>
<sequence>MTLNLSVLTPNRIVWDSEVEEIVLSTNSGQIGILPNHAPIATAVDIGILRIRLNDQWLTMALMGGFARIGNNEITVLVNDAEKGSDIDPQEAQQTLELAEANVKKAEGRRQKIEANLALQRARTRVEAINPIS</sequence>
<reference key="1">
    <citation type="journal article" date="2006" name="Mol. Genet. Genomics">
        <title>The chloroplast genome of Nicotiana sylvestris and Nicotiana tomentosiformis: complete sequencing confirms that the Nicotiana sylvestris progenitor is the maternal genome donor of Nicotiana tabacum.</title>
        <authorList>
            <person name="Yukawa M."/>
            <person name="Tsudzuki T."/>
            <person name="Sugiura M."/>
        </authorList>
    </citation>
    <scope>NUCLEOTIDE SEQUENCE [LARGE SCALE GENOMIC DNA]</scope>
</reference>
<keyword id="KW-0066">ATP synthesis</keyword>
<keyword id="KW-0139">CF(1)</keyword>
<keyword id="KW-0150">Chloroplast</keyword>
<keyword id="KW-0375">Hydrogen ion transport</keyword>
<keyword id="KW-0406">Ion transport</keyword>
<keyword id="KW-0472">Membrane</keyword>
<keyword id="KW-0934">Plastid</keyword>
<keyword id="KW-0793">Thylakoid</keyword>
<keyword id="KW-0813">Transport</keyword>
<gene>
    <name evidence="1" type="primary">atpE</name>
</gene>
<organism>
    <name type="scientific">Nicotiana tomentosiformis</name>
    <name type="common">Tobacco</name>
    <dbReference type="NCBI Taxonomy" id="4098"/>
    <lineage>
        <taxon>Eukaryota</taxon>
        <taxon>Viridiplantae</taxon>
        <taxon>Streptophyta</taxon>
        <taxon>Embryophyta</taxon>
        <taxon>Tracheophyta</taxon>
        <taxon>Spermatophyta</taxon>
        <taxon>Magnoliopsida</taxon>
        <taxon>eudicotyledons</taxon>
        <taxon>Gunneridae</taxon>
        <taxon>Pentapetalae</taxon>
        <taxon>asterids</taxon>
        <taxon>lamiids</taxon>
        <taxon>Solanales</taxon>
        <taxon>Solanaceae</taxon>
        <taxon>Nicotianoideae</taxon>
        <taxon>Nicotianeae</taxon>
        <taxon>Nicotiana</taxon>
    </lineage>
</organism>
<proteinExistence type="inferred from homology"/>
<feature type="chain" id="PRO_0000275208" description="ATP synthase epsilon chain, chloroplastic">
    <location>
        <begin position="1"/>
        <end position="133"/>
    </location>
</feature>
<geneLocation type="chloroplast"/>
<name>ATPE_NICTO</name>
<dbReference type="EMBL" id="AB240139">
    <property type="protein sequence ID" value="BAE48007.1"/>
    <property type="molecule type" value="Genomic_DNA"/>
</dbReference>
<dbReference type="RefSeq" id="YP_398869.1">
    <property type="nucleotide sequence ID" value="NC_007602.1"/>
</dbReference>
<dbReference type="SMR" id="Q33C28"/>
<dbReference type="GeneID" id="3776339"/>
<dbReference type="KEGG" id="nto:3776339"/>
<dbReference type="OrthoDB" id="423436at2759"/>
<dbReference type="GO" id="GO:0009535">
    <property type="term" value="C:chloroplast thylakoid membrane"/>
    <property type="evidence" value="ECO:0007669"/>
    <property type="project" value="UniProtKB-SubCell"/>
</dbReference>
<dbReference type="GO" id="GO:0045259">
    <property type="term" value="C:proton-transporting ATP synthase complex"/>
    <property type="evidence" value="ECO:0007669"/>
    <property type="project" value="UniProtKB-KW"/>
</dbReference>
<dbReference type="GO" id="GO:0005524">
    <property type="term" value="F:ATP binding"/>
    <property type="evidence" value="ECO:0007669"/>
    <property type="project" value="UniProtKB-UniRule"/>
</dbReference>
<dbReference type="GO" id="GO:0046933">
    <property type="term" value="F:proton-transporting ATP synthase activity, rotational mechanism"/>
    <property type="evidence" value="ECO:0007669"/>
    <property type="project" value="UniProtKB-UniRule"/>
</dbReference>
<dbReference type="CDD" id="cd12152">
    <property type="entry name" value="F1-ATPase_delta"/>
    <property type="match status" value="1"/>
</dbReference>
<dbReference type="FunFam" id="2.60.15.10:FF:000002">
    <property type="entry name" value="ATP synthase epsilon chain, chloroplastic"/>
    <property type="match status" value="1"/>
</dbReference>
<dbReference type="Gene3D" id="6.10.140.480">
    <property type="match status" value="1"/>
</dbReference>
<dbReference type="Gene3D" id="2.60.15.10">
    <property type="entry name" value="F0F1 ATP synthase delta/epsilon subunit, N-terminal"/>
    <property type="match status" value="1"/>
</dbReference>
<dbReference type="HAMAP" id="MF_00530">
    <property type="entry name" value="ATP_synth_epsil_bac"/>
    <property type="match status" value="1"/>
</dbReference>
<dbReference type="InterPro" id="IPR001469">
    <property type="entry name" value="ATP_synth_F1_dsu/esu"/>
</dbReference>
<dbReference type="InterPro" id="IPR020546">
    <property type="entry name" value="ATP_synth_F1_dsu/esu_N"/>
</dbReference>
<dbReference type="InterPro" id="IPR020547">
    <property type="entry name" value="ATP_synth_F1_esu_C"/>
</dbReference>
<dbReference type="InterPro" id="IPR036771">
    <property type="entry name" value="ATPsynth_dsu/esu_N"/>
</dbReference>
<dbReference type="NCBIfam" id="TIGR01216">
    <property type="entry name" value="ATP_synt_epsi"/>
    <property type="match status" value="1"/>
</dbReference>
<dbReference type="PANTHER" id="PTHR13822">
    <property type="entry name" value="ATP SYNTHASE DELTA/EPSILON CHAIN"/>
    <property type="match status" value="1"/>
</dbReference>
<dbReference type="PANTHER" id="PTHR13822:SF10">
    <property type="entry name" value="ATP SYNTHASE EPSILON CHAIN, CHLOROPLASTIC"/>
    <property type="match status" value="1"/>
</dbReference>
<dbReference type="Pfam" id="PF00401">
    <property type="entry name" value="ATP-synt_DE"/>
    <property type="match status" value="1"/>
</dbReference>
<dbReference type="Pfam" id="PF02823">
    <property type="entry name" value="ATP-synt_DE_N"/>
    <property type="match status" value="1"/>
</dbReference>
<dbReference type="SUPFAM" id="SSF51344">
    <property type="entry name" value="Epsilon subunit of F1F0-ATP synthase N-terminal domain"/>
    <property type="match status" value="1"/>
</dbReference>
<evidence type="ECO:0000255" key="1">
    <source>
        <dbReference type="HAMAP-Rule" id="MF_00530"/>
    </source>
</evidence>
<accession>Q33C28</accession>
<protein>
    <recommendedName>
        <fullName evidence="1">ATP synthase epsilon chain, chloroplastic</fullName>
    </recommendedName>
    <alternativeName>
        <fullName evidence="1">ATP synthase F1 sector epsilon subunit</fullName>
    </alternativeName>
    <alternativeName>
        <fullName evidence="1">F-ATPase epsilon subunit</fullName>
    </alternativeName>
</protein>